<proteinExistence type="inferred from homology"/>
<gene>
    <name evidence="1" type="primary">yciZ</name>
    <name type="ordered locus">ECSE_1336</name>
</gene>
<evidence type="ECO:0000255" key="1">
    <source>
        <dbReference type="HAMAP-Rule" id="MF_01641"/>
    </source>
</evidence>
<reference key="1">
    <citation type="journal article" date="2008" name="DNA Res.">
        <title>Complete genome sequence and comparative analysis of the wild-type commensal Escherichia coli strain SE11 isolated from a healthy adult.</title>
        <authorList>
            <person name="Oshima K."/>
            <person name="Toh H."/>
            <person name="Ogura Y."/>
            <person name="Sasamoto H."/>
            <person name="Morita H."/>
            <person name="Park S.-H."/>
            <person name="Ooka T."/>
            <person name="Iyoda S."/>
            <person name="Taylor T.D."/>
            <person name="Hayashi T."/>
            <person name="Itoh K."/>
            <person name="Hattori M."/>
        </authorList>
    </citation>
    <scope>NUCLEOTIDE SEQUENCE [LARGE SCALE GENOMIC DNA]</scope>
    <source>
        <strain>SE11</strain>
    </source>
</reference>
<protein>
    <recommendedName>
        <fullName evidence="1">UPF0509 protein YciZ</fullName>
    </recommendedName>
</protein>
<name>YCIZ_ECOSE</name>
<comment type="similarity">
    <text evidence="1">Belongs to the UPF0509 family.</text>
</comment>
<organism>
    <name type="scientific">Escherichia coli (strain SE11)</name>
    <dbReference type="NCBI Taxonomy" id="409438"/>
    <lineage>
        <taxon>Bacteria</taxon>
        <taxon>Pseudomonadati</taxon>
        <taxon>Pseudomonadota</taxon>
        <taxon>Gammaproteobacteria</taxon>
        <taxon>Enterobacterales</taxon>
        <taxon>Enterobacteriaceae</taxon>
        <taxon>Escherichia</taxon>
    </lineage>
</organism>
<sequence length="57" mass="6441">MSEFDAQRVAERIDIVLDILVAGDYHSAIHNLEILKAELLRQVAESTPDIPKAPWEI</sequence>
<accession>B6IA01</accession>
<feature type="chain" id="PRO_1000186847" description="UPF0509 protein YciZ">
    <location>
        <begin position="1"/>
        <end position="57"/>
    </location>
</feature>
<dbReference type="EMBL" id="AP009240">
    <property type="protein sequence ID" value="BAG76860.1"/>
    <property type="molecule type" value="Genomic_DNA"/>
</dbReference>
<dbReference type="RefSeq" id="WP_001288368.1">
    <property type="nucleotide sequence ID" value="NC_011415.1"/>
</dbReference>
<dbReference type="SMR" id="B6IA01"/>
<dbReference type="GeneID" id="93775408"/>
<dbReference type="KEGG" id="ecy:ECSE_1336"/>
<dbReference type="HOGENOM" id="CLU_180697_1_0_6"/>
<dbReference type="Proteomes" id="UP000008199">
    <property type="component" value="Chromosome"/>
</dbReference>
<dbReference type="HAMAP" id="MF_01641">
    <property type="entry name" value="UPF0509"/>
    <property type="match status" value="1"/>
</dbReference>
<dbReference type="InterPro" id="IPR020887">
    <property type="entry name" value="UPF0509"/>
</dbReference>
<dbReference type="NCBIfam" id="NF010179">
    <property type="entry name" value="PRK13658.1"/>
    <property type="match status" value="1"/>
</dbReference>
<dbReference type="Pfam" id="PF23675">
    <property type="entry name" value="YciZ"/>
    <property type="match status" value="1"/>
</dbReference>